<keyword id="KW-0145">Chemotaxis</keyword>
<keyword id="KW-0378">Hydrolase</keyword>
<accession>Q9UYF7</accession>
<accession>G8ZIX2</accession>
<organism>
    <name type="scientific">Pyrococcus abyssi (strain GE5 / Orsay)</name>
    <dbReference type="NCBI Taxonomy" id="272844"/>
    <lineage>
        <taxon>Archaea</taxon>
        <taxon>Methanobacteriati</taxon>
        <taxon>Methanobacteriota</taxon>
        <taxon>Thermococci</taxon>
        <taxon>Thermococcales</taxon>
        <taxon>Thermococcaceae</taxon>
        <taxon>Pyrococcus</taxon>
    </lineage>
</organism>
<proteinExistence type="inferred from homology"/>
<evidence type="ECO:0000255" key="1">
    <source>
        <dbReference type="HAMAP-Rule" id="MF_01440"/>
    </source>
</evidence>
<feature type="chain" id="PRO_0000251096" description="Probable chemoreceptor glutamine deamidase CheD">
    <location>
        <begin position="1"/>
        <end position="163"/>
    </location>
</feature>
<reference key="1">
    <citation type="journal article" date="2003" name="Mol. Microbiol.">
        <title>An integrated analysis of the genome of the hyperthermophilic archaeon Pyrococcus abyssi.</title>
        <authorList>
            <person name="Cohen G.N."/>
            <person name="Barbe V."/>
            <person name="Flament D."/>
            <person name="Galperin M."/>
            <person name="Heilig R."/>
            <person name="Lecompte O."/>
            <person name="Poch O."/>
            <person name="Prieur D."/>
            <person name="Querellou J."/>
            <person name="Ripp R."/>
            <person name="Thierry J.-C."/>
            <person name="Van der Oost J."/>
            <person name="Weissenbach J."/>
            <person name="Zivanovic Y."/>
            <person name="Forterre P."/>
        </authorList>
    </citation>
    <scope>NUCLEOTIDE SEQUENCE [LARGE SCALE GENOMIC DNA]</scope>
    <source>
        <strain>GE5 / Orsay</strain>
    </source>
</reference>
<reference key="2">
    <citation type="journal article" date="2012" name="Curr. Microbiol.">
        <title>Re-annotation of two hyperthermophilic archaea Pyrococcus abyssi GE5 and Pyrococcus furiosus DSM 3638.</title>
        <authorList>
            <person name="Gao J."/>
            <person name="Wang J."/>
        </authorList>
    </citation>
    <scope>GENOME REANNOTATION</scope>
    <source>
        <strain>GE5 / Orsay</strain>
    </source>
</reference>
<protein>
    <recommendedName>
        <fullName evidence="1">Probable chemoreceptor glutamine deamidase CheD</fullName>
        <ecNumber evidence="1">3.5.1.44</ecNumber>
    </recommendedName>
</protein>
<dbReference type="EC" id="3.5.1.44" evidence="1"/>
<dbReference type="EMBL" id="AJ248288">
    <property type="protein sequence ID" value="CAB50455.1"/>
    <property type="molecule type" value="Genomic_DNA"/>
</dbReference>
<dbReference type="EMBL" id="HE613800">
    <property type="protein sequence ID" value="CCE71005.1"/>
    <property type="molecule type" value="Genomic_DNA"/>
</dbReference>
<dbReference type="PIR" id="A75002">
    <property type="entry name" value="A75002"/>
</dbReference>
<dbReference type="RefSeq" id="WP_010868668.1">
    <property type="nucleotide sequence ID" value="NC_000868.1"/>
</dbReference>
<dbReference type="SMR" id="Q9UYF7"/>
<dbReference type="STRING" id="272844.PAB1335"/>
<dbReference type="KEGG" id="pab:PAB1335"/>
<dbReference type="PATRIC" id="fig|272844.11.peg.1650"/>
<dbReference type="eggNOG" id="arCOG02380">
    <property type="taxonomic scope" value="Archaea"/>
</dbReference>
<dbReference type="HOGENOM" id="CLU_087854_2_0_2"/>
<dbReference type="OrthoDB" id="10499at2157"/>
<dbReference type="PhylomeDB" id="Q9UYF7"/>
<dbReference type="Proteomes" id="UP000000810">
    <property type="component" value="Chromosome"/>
</dbReference>
<dbReference type="Proteomes" id="UP000009139">
    <property type="component" value="Chromosome"/>
</dbReference>
<dbReference type="GO" id="GO:0050568">
    <property type="term" value="F:protein-glutamine glutaminase activity"/>
    <property type="evidence" value="ECO:0007669"/>
    <property type="project" value="UniProtKB-UniRule"/>
</dbReference>
<dbReference type="GO" id="GO:0006935">
    <property type="term" value="P:chemotaxis"/>
    <property type="evidence" value="ECO:0007669"/>
    <property type="project" value="UniProtKB-UniRule"/>
</dbReference>
<dbReference type="CDD" id="cd16352">
    <property type="entry name" value="CheD"/>
    <property type="match status" value="1"/>
</dbReference>
<dbReference type="Gene3D" id="3.30.1330.200">
    <property type="match status" value="1"/>
</dbReference>
<dbReference type="HAMAP" id="MF_01440">
    <property type="entry name" value="CheD"/>
    <property type="match status" value="1"/>
</dbReference>
<dbReference type="InterPro" id="IPR038592">
    <property type="entry name" value="CheD-like_sf"/>
</dbReference>
<dbReference type="InterPro" id="IPR005659">
    <property type="entry name" value="Chemorcpt_Glu_NH3ase_CheD"/>
</dbReference>
<dbReference type="InterPro" id="IPR011324">
    <property type="entry name" value="Cytotoxic_necrot_fac-like_cat"/>
</dbReference>
<dbReference type="PANTHER" id="PTHR35147">
    <property type="entry name" value="CHEMORECEPTOR GLUTAMINE DEAMIDASE CHED-RELATED"/>
    <property type="match status" value="1"/>
</dbReference>
<dbReference type="PANTHER" id="PTHR35147:SF1">
    <property type="entry name" value="CHEMORECEPTOR GLUTAMINE DEAMIDASE CHED-RELATED"/>
    <property type="match status" value="1"/>
</dbReference>
<dbReference type="Pfam" id="PF03975">
    <property type="entry name" value="CheD"/>
    <property type="match status" value="1"/>
</dbReference>
<dbReference type="SUPFAM" id="SSF64438">
    <property type="entry name" value="CNF1/YfiH-like putative cysteine hydrolases"/>
    <property type="match status" value="1"/>
</dbReference>
<gene>
    <name evidence="1" type="primary">cheD</name>
    <name type="ordered locus">PYRAB15510</name>
    <name type="ORF">PAB1335</name>
</gene>
<comment type="function">
    <text evidence="1">Probably deamidates glutamine residues to glutamate on methyl-accepting chemotaxis receptors (MCPs), playing an important role in chemotaxis.</text>
</comment>
<comment type="catalytic activity">
    <reaction evidence="1">
        <text>L-glutaminyl-[protein] + H2O = L-glutamyl-[protein] + NH4(+)</text>
        <dbReference type="Rhea" id="RHEA:16441"/>
        <dbReference type="Rhea" id="RHEA-COMP:10207"/>
        <dbReference type="Rhea" id="RHEA-COMP:10208"/>
        <dbReference type="ChEBI" id="CHEBI:15377"/>
        <dbReference type="ChEBI" id="CHEBI:28938"/>
        <dbReference type="ChEBI" id="CHEBI:29973"/>
        <dbReference type="ChEBI" id="CHEBI:30011"/>
        <dbReference type="EC" id="3.5.1.44"/>
    </reaction>
</comment>
<comment type="similarity">
    <text evidence="1">Belongs to the CheD family.</text>
</comment>
<name>CHED_PYRAB</name>
<sequence length="163" mass="17736">MTREIKVGIGDYAVGKGEGIISTYGLGSCVGITLYDRVTKVGGLLHALLPEAARYGHRGNPAKYVDTGLQLLLKEVLKLGASKFRLEAKLFGGAQMFQNIKSDELKIGERNVQTAKRELKKLGIRLVAEDTGGRGGRTIYLDLSTGKVRMRKVIGGQVIEKVY</sequence>